<evidence type="ECO:0000255" key="1">
    <source>
        <dbReference type="HAMAP-Rule" id="MF_00823"/>
    </source>
</evidence>
<evidence type="ECO:0000255" key="2">
    <source>
        <dbReference type="PROSITE-ProRule" id="PRU01137"/>
    </source>
</evidence>
<proteinExistence type="inferred from homology"/>
<keyword id="KW-0067">ATP-binding</keyword>
<keyword id="KW-0963">Cytoplasm</keyword>
<keyword id="KW-0275">Fatty acid biosynthesis</keyword>
<keyword id="KW-0276">Fatty acid metabolism</keyword>
<keyword id="KW-0444">Lipid biosynthesis</keyword>
<keyword id="KW-0443">Lipid metabolism</keyword>
<keyword id="KW-0547">Nucleotide-binding</keyword>
<keyword id="KW-0808">Transferase</keyword>
<name>ACCA_STRZP</name>
<accession>C1CIS8</accession>
<reference key="1">
    <citation type="journal article" date="2010" name="Genome Biol.">
        <title>Structure and dynamics of the pan-genome of Streptococcus pneumoniae and closely related species.</title>
        <authorList>
            <person name="Donati C."/>
            <person name="Hiller N.L."/>
            <person name="Tettelin H."/>
            <person name="Muzzi A."/>
            <person name="Croucher N.J."/>
            <person name="Angiuoli S.V."/>
            <person name="Oggioni M."/>
            <person name="Dunning Hotopp J.C."/>
            <person name="Hu F.Z."/>
            <person name="Riley D.R."/>
            <person name="Covacci A."/>
            <person name="Mitchell T.J."/>
            <person name="Bentley S.D."/>
            <person name="Kilian M."/>
            <person name="Ehrlich G.D."/>
            <person name="Rappuoli R."/>
            <person name="Moxon E.R."/>
            <person name="Masignani V."/>
        </authorList>
    </citation>
    <scope>NUCLEOTIDE SEQUENCE [LARGE SCALE GENOMIC DNA]</scope>
    <source>
        <strain>P1031</strain>
    </source>
</reference>
<protein>
    <recommendedName>
        <fullName evidence="1">Acetyl-coenzyme A carboxylase carboxyl transferase subunit alpha</fullName>
        <shortName evidence="1">ACCase subunit alpha</shortName>
        <shortName evidence="1">Acetyl-CoA carboxylase carboxyltransferase subunit alpha</shortName>
        <ecNumber evidence="1">2.1.3.15</ecNumber>
    </recommendedName>
</protein>
<dbReference type="EC" id="2.1.3.15" evidence="1"/>
<dbReference type="EMBL" id="CP000920">
    <property type="protein sequence ID" value="ACO21155.1"/>
    <property type="molecule type" value="Genomic_DNA"/>
</dbReference>
<dbReference type="RefSeq" id="WP_001017398.1">
    <property type="nucleotide sequence ID" value="NC_012467.1"/>
</dbReference>
<dbReference type="SMR" id="C1CIS8"/>
<dbReference type="KEGG" id="spp:SPP_0458"/>
<dbReference type="HOGENOM" id="CLU_015486_0_2_9"/>
<dbReference type="UniPathway" id="UPA00655">
    <property type="reaction ID" value="UER00711"/>
</dbReference>
<dbReference type="GO" id="GO:0009317">
    <property type="term" value="C:acetyl-CoA carboxylase complex"/>
    <property type="evidence" value="ECO:0007669"/>
    <property type="project" value="InterPro"/>
</dbReference>
<dbReference type="GO" id="GO:0003989">
    <property type="term" value="F:acetyl-CoA carboxylase activity"/>
    <property type="evidence" value="ECO:0007669"/>
    <property type="project" value="InterPro"/>
</dbReference>
<dbReference type="GO" id="GO:0005524">
    <property type="term" value="F:ATP binding"/>
    <property type="evidence" value="ECO:0007669"/>
    <property type="project" value="UniProtKB-KW"/>
</dbReference>
<dbReference type="GO" id="GO:0016743">
    <property type="term" value="F:carboxyl- or carbamoyltransferase activity"/>
    <property type="evidence" value="ECO:0007669"/>
    <property type="project" value="UniProtKB-UniRule"/>
</dbReference>
<dbReference type="GO" id="GO:0006633">
    <property type="term" value="P:fatty acid biosynthetic process"/>
    <property type="evidence" value="ECO:0007669"/>
    <property type="project" value="UniProtKB-KW"/>
</dbReference>
<dbReference type="GO" id="GO:2001295">
    <property type="term" value="P:malonyl-CoA biosynthetic process"/>
    <property type="evidence" value="ECO:0007669"/>
    <property type="project" value="UniProtKB-UniRule"/>
</dbReference>
<dbReference type="Gene3D" id="3.90.226.10">
    <property type="entry name" value="2-enoyl-CoA Hydratase, Chain A, domain 1"/>
    <property type="match status" value="1"/>
</dbReference>
<dbReference type="HAMAP" id="MF_00823">
    <property type="entry name" value="AcetylCoA_CT_alpha"/>
    <property type="match status" value="1"/>
</dbReference>
<dbReference type="InterPro" id="IPR001095">
    <property type="entry name" value="Acetyl_CoA_COase_a_su"/>
</dbReference>
<dbReference type="InterPro" id="IPR029045">
    <property type="entry name" value="ClpP/crotonase-like_dom_sf"/>
</dbReference>
<dbReference type="InterPro" id="IPR011763">
    <property type="entry name" value="COA_CT_C"/>
</dbReference>
<dbReference type="NCBIfam" id="TIGR00513">
    <property type="entry name" value="accA"/>
    <property type="match status" value="1"/>
</dbReference>
<dbReference type="NCBIfam" id="NF041504">
    <property type="entry name" value="AccA_sub"/>
    <property type="match status" value="1"/>
</dbReference>
<dbReference type="NCBIfam" id="NF004344">
    <property type="entry name" value="PRK05724.1"/>
    <property type="match status" value="1"/>
</dbReference>
<dbReference type="NCBIfam" id="NF008971">
    <property type="entry name" value="PRK12319.1"/>
    <property type="match status" value="1"/>
</dbReference>
<dbReference type="PANTHER" id="PTHR42853">
    <property type="entry name" value="ACETYL-COENZYME A CARBOXYLASE CARBOXYL TRANSFERASE SUBUNIT ALPHA"/>
    <property type="match status" value="1"/>
</dbReference>
<dbReference type="PANTHER" id="PTHR42853:SF3">
    <property type="entry name" value="ACETYL-COENZYME A CARBOXYLASE CARBOXYL TRANSFERASE SUBUNIT ALPHA, CHLOROPLASTIC"/>
    <property type="match status" value="1"/>
</dbReference>
<dbReference type="Pfam" id="PF03255">
    <property type="entry name" value="ACCA"/>
    <property type="match status" value="1"/>
</dbReference>
<dbReference type="PRINTS" id="PR01069">
    <property type="entry name" value="ACCCTRFRASEA"/>
</dbReference>
<dbReference type="SUPFAM" id="SSF52096">
    <property type="entry name" value="ClpP/crotonase"/>
    <property type="match status" value="1"/>
</dbReference>
<dbReference type="PROSITE" id="PS50989">
    <property type="entry name" value="COA_CT_CTER"/>
    <property type="match status" value="1"/>
</dbReference>
<feature type="chain" id="PRO_1000148755" description="Acetyl-coenzyme A carboxylase carboxyl transferase subunit alpha">
    <location>
        <begin position="1"/>
        <end position="255"/>
    </location>
</feature>
<feature type="domain" description="CoA carboxyltransferase C-terminal" evidence="2">
    <location>
        <begin position="1"/>
        <end position="235"/>
    </location>
</feature>
<sequence length="255" mass="28248">MNIAKIVREAREQSRLTTLDFATGIFDEFIQLHGDRSFRDDGAVVGGIGWLGDQAVTVVGIQKGKSLQDNLKRNFGQPHPEGYRKALRLMKQAEKFGRPVVTFINTAGAYPGVGAEERGQGEAIARNLMEMSDLKVPIIAIIIGEGGSGGALALAVADRVWMLENSIYAILSPEGFASILWKDGTRAMEAAELMKITSHELLEMDVVDKVISEIGLSSKELIKSVKKELQTELARLSQKPLEELLEERYQRFRKY</sequence>
<organism>
    <name type="scientific">Streptococcus pneumoniae (strain P1031)</name>
    <dbReference type="NCBI Taxonomy" id="488223"/>
    <lineage>
        <taxon>Bacteria</taxon>
        <taxon>Bacillati</taxon>
        <taxon>Bacillota</taxon>
        <taxon>Bacilli</taxon>
        <taxon>Lactobacillales</taxon>
        <taxon>Streptococcaceae</taxon>
        <taxon>Streptococcus</taxon>
    </lineage>
</organism>
<gene>
    <name evidence="1" type="primary">accA</name>
    <name type="ordered locus">SPP_0458</name>
</gene>
<comment type="function">
    <text evidence="1">Component of the acetyl coenzyme A carboxylase (ACC) complex. First, biotin carboxylase catalyzes the carboxylation of biotin on its carrier protein (BCCP) and then the CO(2) group is transferred by the carboxyltransferase to acetyl-CoA to form malonyl-CoA.</text>
</comment>
<comment type="catalytic activity">
    <reaction evidence="1">
        <text>N(6)-carboxybiotinyl-L-lysyl-[protein] + acetyl-CoA = N(6)-biotinyl-L-lysyl-[protein] + malonyl-CoA</text>
        <dbReference type="Rhea" id="RHEA:54728"/>
        <dbReference type="Rhea" id="RHEA-COMP:10505"/>
        <dbReference type="Rhea" id="RHEA-COMP:10506"/>
        <dbReference type="ChEBI" id="CHEBI:57288"/>
        <dbReference type="ChEBI" id="CHEBI:57384"/>
        <dbReference type="ChEBI" id="CHEBI:83144"/>
        <dbReference type="ChEBI" id="CHEBI:83145"/>
        <dbReference type="EC" id="2.1.3.15"/>
    </reaction>
</comment>
<comment type="pathway">
    <text evidence="1">Lipid metabolism; malonyl-CoA biosynthesis; malonyl-CoA from acetyl-CoA: step 1/1.</text>
</comment>
<comment type="subunit">
    <text evidence="1">Acetyl-CoA carboxylase is a heterohexamer composed of biotin carboxyl carrier protein (AccB), biotin carboxylase (AccC) and two subunits each of ACCase subunit alpha (AccA) and ACCase subunit beta (AccD).</text>
</comment>
<comment type="subcellular location">
    <subcellularLocation>
        <location evidence="1">Cytoplasm</location>
    </subcellularLocation>
</comment>
<comment type="similarity">
    <text evidence="1">Belongs to the AccA family.</text>
</comment>